<evidence type="ECO:0000255" key="1">
    <source>
        <dbReference type="HAMAP-Rule" id="MF_00709"/>
    </source>
</evidence>
<protein>
    <recommendedName>
        <fullName evidence="1">Fumarate reductase subunit D</fullName>
    </recommendedName>
    <alternativeName>
        <fullName evidence="1">Fumarate reductase 13 kDa hydrophobic protein</fullName>
    </alternativeName>
    <alternativeName>
        <fullName evidence="1">Quinol-fumarate reductase subunit D</fullName>
        <shortName evidence="1">QFR subunit D</shortName>
    </alternativeName>
</protein>
<name>FRDD_ECO57</name>
<sequence length="119" mass="13107">MINPNPKRSDEPVFWGLFGAGGMWSAIIAPVMILLVGILLPLGLFPGDALSYERVLAFAQSFIGRVFLFLMIVLPLWCGLHRMHHAMHDLKIHVPAGKWVFYGLAAILTVVTLIGVVTI</sequence>
<accession>P0A8Q4</accession>
<accession>P03806</accession>
<accession>Q47048</accession>
<reference key="1">
    <citation type="journal article" date="2001" name="Nature">
        <title>Genome sequence of enterohaemorrhagic Escherichia coli O157:H7.</title>
        <authorList>
            <person name="Perna N.T."/>
            <person name="Plunkett G. III"/>
            <person name="Burland V."/>
            <person name="Mau B."/>
            <person name="Glasner J.D."/>
            <person name="Rose D.J."/>
            <person name="Mayhew G.F."/>
            <person name="Evans P.S."/>
            <person name="Gregor J."/>
            <person name="Kirkpatrick H.A."/>
            <person name="Posfai G."/>
            <person name="Hackett J."/>
            <person name="Klink S."/>
            <person name="Boutin A."/>
            <person name="Shao Y."/>
            <person name="Miller L."/>
            <person name="Grotbeck E.J."/>
            <person name="Davis N.W."/>
            <person name="Lim A."/>
            <person name="Dimalanta E.T."/>
            <person name="Potamousis K."/>
            <person name="Apodaca J."/>
            <person name="Anantharaman T.S."/>
            <person name="Lin J."/>
            <person name="Yen G."/>
            <person name="Schwartz D.C."/>
            <person name="Welch R.A."/>
            <person name="Blattner F.R."/>
        </authorList>
    </citation>
    <scope>NUCLEOTIDE SEQUENCE [LARGE SCALE GENOMIC DNA]</scope>
    <source>
        <strain>O157:H7 / EDL933 / ATCC 700927 / EHEC</strain>
    </source>
</reference>
<reference key="2">
    <citation type="journal article" date="2001" name="DNA Res.">
        <title>Complete genome sequence of enterohemorrhagic Escherichia coli O157:H7 and genomic comparison with a laboratory strain K-12.</title>
        <authorList>
            <person name="Hayashi T."/>
            <person name="Makino K."/>
            <person name="Ohnishi M."/>
            <person name="Kurokawa K."/>
            <person name="Ishii K."/>
            <person name="Yokoyama K."/>
            <person name="Han C.-G."/>
            <person name="Ohtsubo E."/>
            <person name="Nakayama K."/>
            <person name="Murata T."/>
            <person name="Tanaka M."/>
            <person name="Tobe T."/>
            <person name="Iida T."/>
            <person name="Takami H."/>
            <person name="Honda T."/>
            <person name="Sasakawa C."/>
            <person name="Ogasawara N."/>
            <person name="Yasunaga T."/>
            <person name="Kuhara S."/>
            <person name="Shiba T."/>
            <person name="Hattori M."/>
            <person name="Shinagawa H."/>
        </authorList>
    </citation>
    <scope>NUCLEOTIDE SEQUENCE [LARGE SCALE GENOMIC DNA]</scope>
    <source>
        <strain>O157:H7 / Sakai / RIMD 0509952 / EHEC</strain>
    </source>
</reference>
<feature type="chain" id="PRO_0000196543" description="Fumarate reductase subunit D">
    <location>
        <begin position="1"/>
        <end position="119"/>
    </location>
</feature>
<feature type="transmembrane region" description="Helical" evidence="1">
    <location>
        <begin position="26"/>
        <end position="46"/>
    </location>
</feature>
<feature type="transmembrane region" description="Helical" evidence="1">
    <location>
        <begin position="55"/>
        <end position="75"/>
    </location>
</feature>
<feature type="transmembrane region" description="Helical" evidence="1">
    <location>
        <begin position="99"/>
        <end position="119"/>
    </location>
</feature>
<comment type="function">
    <text evidence="1">Two distinct, membrane-bound, FAD-containing enzymes are responsible for the catalysis of fumarate and succinate interconversion; fumarate reductase is used in anaerobic growth, and succinate dehydrogenase is used in aerobic growth. Anchors the catalytic components of the fumarate reductase complex to the cell inner membrane, binds quinones.</text>
</comment>
<comment type="subunit">
    <text evidence="1">Part of an enzyme complex containing four subunits: a flavoprotein (FrdA), an iron-sulfur protein (FrdB), and two hydrophobic anchor proteins (FrdC and FrdD).</text>
</comment>
<comment type="subcellular location">
    <subcellularLocation>
        <location evidence="1">Cell inner membrane</location>
        <topology evidence="1">Multi-pass membrane protein</topology>
    </subcellularLocation>
</comment>
<comment type="similarity">
    <text evidence="1">Belongs to the FrdD family.</text>
</comment>
<keyword id="KW-0997">Cell inner membrane</keyword>
<keyword id="KW-1003">Cell membrane</keyword>
<keyword id="KW-0472">Membrane</keyword>
<keyword id="KW-1185">Reference proteome</keyword>
<keyword id="KW-0812">Transmembrane</keyword>
<keyword id="KW-1133">Transmembrane helix</keyword>
<dbReference type="EMBL" id="AE005174">
    <property type="protein sequence ID" value="AAG59352.1"/>
    <property type="molecule type" value="Genomic_DNA"/>
</dbReference>
<dbReference type="EMBL" id="BA000007">
    <property type="protein sequence ID" value="BAB38555.1"/>
    <property type="molecule type" value="Genomic_DNA"/>
</dbReference>
<dbReference type="PIR" id="D86111">
    <property type="entry name" value="D86111"/>
</dbReference>
<dbReference type="PIR" id="D91270">
    <property type="entry name" value="D91270"/>
</dbReference>
<dbReference type="RefSeq" id="NP_313159.1">
    <property type="nucleotide sequence ID" value="NC_002695.1"/>
</dbReference>
<dbReference type="RefSeq" id="WP_000609663.1">
    <property type="nucleotide sequence ID" value="NZ_VOAI01000008.1"/>
</dbReference>
<dbReference type="SMR" id="P0A8Q4"/>
<dbReference type="STRING" id="155864.Z5758"/>
<dbReference type="GeneID" id="75169672"/>
<dbReference type="GeneID" id="913185"/>
<dbReference type="KEGG" id="ece:Z5758"/>
<dbReference type="KEGG" id="ecs:ECs_5132"/>
<dbReference type="PATRIC" id="fig|386585.9.peg.5365"/>
<dbReference type="eggNOG" id="COG3080">
    <property type="taxonomic scope" value="Bacteria"/>
</dbReference>
<dbReference type="HOGENOM" id="CLU_168367_0_0_6"/>
<dbReference type="OMA" id="ACYAFAG"/>
<dbReference type="Proteomes" id="UP000000558">
    <property type="component" value="Chromosome"/>
</dbReference>
<dbReference type="Proteomes" id="UP000002519">
    <property type="component" value="Chromosome"/>
</dbReference>
<dbReference type="GO" id="GO:0045283">
    <property type="term" value="C:fumarate reductase complex"/>
    <property type="evidence" value="ECO:0007669"/>
    <property type="project" value="UniProtKB-UniRule"/>
</dbReference>
<dbReference type="GO" id="GO:0005886">
    <property type="term" value="C:plasma membrane"/>
    <property type="evidence" value="ECO:0007669"/>
    <property type="project" value="UniProtKB-SubCell"/>
</dbReference>
<dbReference type="GO" id="GO:0000104">
    <property type="term" value="F:succinate dehydrogenase activity"/>
    <property type="evidence" value="ECO:0007669"/>
    <property type="project" value="UniProtKB-UniRule"/>
</dbReference>
<dbReference type="GO" id="GO:0006106">
    <property type="term" value="P:fumarate metabolic process"/>
    <property type="evidence" value="ECO:0007669"/>
    <property type="project" value="InterPro"/>
</dbReference>
<dbReference type="CDD" id="cd00547">
    <property type="entry name" value="QFR_TypeD_subunitD"/>
    <property type="match status" value="1"/>
</dbReference>
<dbReference type="FunFam" id="1.20.1300.10:FF:000002">
    <property type="entry name" value="Fumarate reductase subunit D"/>
    <property type="match status" value="1"/>
</dbReference>
<dbReference type="Gene3D" id="1.20.1300.10">
    <property type="entry name" value="Fumarate reductase/succinate dehydrogenase, transmembrane subunit"/>
    <property type="match status" value="1"/>
</dbReference>
<dbReference type="HAMAP" id="MF_00709">
    <property type="entry name" value="Fumarate_red_D"/>
    <property type="match status" value="1"/>
</dbReference>
<dbReference type="InterPro" id="IPR003418">
    <property type="entry name" value="Fumarate_red_D"/>
</dbReference>
<dbReference type="InterPro" id="IPR034804">
    <property type="entry name" value="SQR/QFR_C/D"/>
</dbReference>
<dbReference type="NCBIfam" id="NF003977">
    <property type="entry name" value="PRK05470.1-1"/>
    <property type="match status" value="1"/>
</dbReference>
<dbReference type="Pfam" id="PF02313">
    <property type="entry name" value="Fumarate_red_D"/>
    <property type="match status" value="1"/>
</dbReference>
<dbReference type="PIRSF" id="PIRSF000179">
    <property type="entry name" value="FrdD"/>
    <property type="match status" value="1"/>
</dbReference>
<dbReference type="SUPFAM" id="SSF81343">
    <property type="entry name" value="Fumarate reductase respiratory complex transmembrane subunits"/>
    <property type="match status" value="1"/>
</dbReference>
<organism>
    <name type="scientific">Escherichia coli O157:H7</name>
    <dbReference type="NCBI Taxonomy" id="83334"/>
    <lineage>
        <taxon>Bacteria</taxon>
        <taxon>Pseudomonadati</taxon>
        <taxon>Pseudomonadota</taxon>
        <taxon>Gammaproteobacteria</taxon>
        <taxon>Enterobacterales</taxon>
        <taxon>Enterobacteriaceae</taxon>
        <taxon>Escherichia</taxon>
    </lineage>
</organism>
<gene>
    <name evidence="1" type="primary">frdD</name>
    <name type="ordered locus">Z5758</name>
    <name type="ordered locus">ECs5132</name>
</gene>
<proteinExistence type="inferred from homology"/>